<dbReference type="EC" id="1.1.1.86"/>
<dbReference type="EMBL" id="X68150">
    <property type="protein sequence ID" value="CAA48253.1"/>
    <property type="molecule type" value="mRNA"/>
</dbReference>
<dbReference type="EMBL" id="X69880">
    <property type="protein sequence ID" value="CAA49506.1"/>
    <property type="molecule type" value="Genomic_DNA"/>
</dbReference>
<dbReference type="EMBL" id="AL137082">
    <property type="protein sequence ID" value="CAB68199.1"/>
    <property type="molecule type" value="Genomic_DNA"/>
</dbReference>
<dbReference type="EMBL" id="CP002686">
    <property type="protein sequence ID" value="AEE79804.1"/>
    <property type="molecule type" value="Genomic_DNA"/>
</dbReference>
<dbReference type="EMBL" id="CP002686">
    <property type="protein sequence ID" value="AEE79805.1"/>
    <property type="molecule type" value="Genomic_DNA"/>
</dbReference>
<dbReference type="EMBL" id="CP002686">
    <property type="protein sequence ID" value="AEE79806.1"/>
    <property type="molecule type" value="Genomic_DNA"/>
</dbReference>
<dbReference type="EMBL" id="AF324671">
    <property type="protein sequence ID" value="AAG40022.1"/>
    <property type="molecule type" value="mRNA"/>
</dbReference>
<dbReference type="EMBL" id="AF329500">
    <property type="protein sequence ID" value="AAG42917.1"/>
    <property type="molecule type" value="mRNA"/>
</dbReference>
<dbReference type="EMBL" id="AY062094">
    <property type="protein sequence ID" value="AAL32973.1"/>
    <property type="molecule type" value="mRNA"/>
</dbReference>
<dbReference type="EMBL" id="AY065398">
    <property type="protein sequence ID" value="AAL38839.1"/>
    <property type="molecule type" value="mRNA"/>
</dbReference>
<dbReference type="EMBL" id="AY096556">
    <property type="protein sequence ID" value="AAM20206.1"/>
    <property type="molecule type" value="mRNA"/>
</dbReference>
<dbReference type="EMBL" id="BT000669">
    <property type="protein sequence ID" value="AAN31816.1"/>
    <property type="molecule type" value="mRNA"/>
</dbReference>
<dbReference type="EMBL" id="BT000822">
    <property type="protein sequence ID" value="AAN33197.1"/>
    <property type="molecule type" value="mRNA"/>
</dbReference>
<dbReference type="PIR" id="S30145">
    <property type="entry name" value="S30145"/>
</dbReference>
<dbReference type="PIR" id="T45681">
    <property type="entry name" value="T45681"/>
</dbReference>
<dbReference type="RefSeq" id="NP_001078309.1">
    <property type="nucleotide sequence ID" value="NM_001084840.1"/>
</dbReference>
<dbReference type="RefSeq" id="NP_001190127.1">
    <property type="nucleotide sequence ID" value="NM_001203198.1"/>
</dbReference>
<dbReference type="RefSeq" id="NP_191420.1">
    <property type="nucleotide sequence ID" value="NM_115723.4"/>
</dbReference>
<dbReference type="SMR" id="Q05758"/>
<dbReference type="BioGRID" id="10345">
    <property type="interactions" value="25"/>
</dbReference>
<dbReference type="FunCoup" id="Q05758">
    <property type="interactions" value="1366"/>
</dbReference>
<dbReference type="STRING" id="3702.Q05758"/>
<dbReference type="iPTMnet" id="Q05758"/>
<dbReference type="PaxDb" id="3702-AT3G58610.3"/>
<dbReference type="ProteomicsDB" id="250650"/>
<dbReference type="EnsemblPlants" id="AT3G58610.1">
    <property type="protein sequence ID" value="AT3G58610.1"/>
    <property type="gene ID" value="AT3G58610"/>
</dbReference>
<dbReference type="EnsemblPlants" id="AT3G58610.2">
    <property type="protein sequence ID" value="AT3G58610.2"/>
    <property type="gene ID" value="AT3G58610"/>
</dbReference>
<dbReference type="EnsemblPlants" id="AT3G58610.3">
    <property type="protein sequence ID" value="AT3G58610.3"/>
    <property type="gene ID" value="AT3G58610"/>
</dbReference>
<dbReference type="GeneID" id="825030"/>
<dbReference type="Gramene" id="AT3G58610.1">
    <property type="protein sequence ID" value="AT3G58610.1"/>
    <property type="gene ID" value="AT3G58610"/>
</dbReference>
<dbReference type="Gramene" id="AT3G58610.2">
    <property type="protein sequence ID" value="AT3G58610.2"/>
    <property type="gene ID" value="AT3G58610"/>
</dbReference>
<dbReference type="Gramene" id="AT3G58610.3">
    <property type="protein sequence ID" value="AT3G58610.3"/>
    <property type="gene ID" value="AT3G58610"/>
</dbReference>
<dbReference type="KEGG" id="ath:AT3G58610"/>
<dbReference type="Araport" id="AT3G58610"/>
<dbReference type="TAIR" id="AT3G58610"/>
<dbReference type="eggNOG" id="ENOG502QQBF">
    <property type="taxonomic scope" value="Eukaryota"/>
</dbReference>
<dbReference type="HOGENOM" id="CLU_033821_5_1_1"/>
<dbReference type="InParanoid" id="Q05758"/>
<dbReference type="OMA" id="EIFSHMK"/>
<dbReference type="OrthoDB" id="10255643at2759"/>
<dbReference type="PhylomeDB" id="Q05758"/>
<dbReference type="BioCyc" id="ARA:AT3G58610-MONOMER"/>
<dbReference type="UniPathway" id="UPA00047">
    <property type="reaction ID" value="UER00056"/>
</dbReference>
<dbReference type="UniPathway" id="UPA00049">
    <property type="reaction ID" value="UER00060"/>
</dbReference>
<dbReference type="CD-CODE" id="4299E36E">
    <property type="entry name" value="Nucleolus"/>
</dbReference>
<dbReference type="PRO" id="PR:Q05758"/>
<dbReference type="Proteomes" id="UP000006548">
    <property type="component" value="Chromosome 3"/>
</dbReference>
<dbReference type="ExpressionAtlas" id="Q05758">
    <property type="expression patterns" value="baseline and differential"/>
</dbReference>
<dbReference type="GO" id="GO:0048046">
    <property type="term" value="C:apoplast"/>
    <property type="evidence" value="ECO:0007005"/>
    <property type="project" value="TAIR"/>
</dbReference>
<dbReference type="GO" id="GO:0009507">
    <property type="term" value="C:chloroplast"/>
    <property type="evidence" value="ECO:0007005"/>
    <property type="project" value="TAIR"/>
</dbReference>
<dbReference type="GO" id="GO:0009941">
    <property type="term" value="C:chloroplast envelope"/>
    <property type="evidence" value="ECO:0007005"/>
    <property type="project" value="TAIR"/>
</dbReference>
<dbReference type="GO" id="GO:0009570">
    <property type="term" value="C:chloroplast stroma"/>
    <property type="evidence" value="ECO:0007005"/>
    <property type="project" value="TAIR"/>
</dbReference>
<dbReference type="GO" id="GO:0005829">
    <property type="term" value="C:cytosol"/>
    <property type="evidence" value="ECO:0007005"/>
    <property type="project" value="TAIR"/>
</dbReference>
<dbReference type="GO" id="GO:0005739">
    <property type="term" value="C:mitochondrion"/>
    <property type="evidence" value="ECO:0007005"/>
    <property type="project" value="TAIR"/>
</dbReference>
<dbReference type="GO" id="GO:0009505">
    <property type="term" value="C:plant-type cell wall"/>
    <property type="evidence" value="ECO:0007005"/>
    <property type="project" value="TAIR"/>
</dbReference>
<dbReference type="GO" id="GO:0009536">
    <property type="term" value="C:plastid"/>
    <property type="evidence" value="ECO:0007005"/>
    <property type="project" value="TAIR"/>
</dbReference>
<dbReference type="GO" id="GO:0005507">
    <property type="term" value="F:copper ion binding"/>
    <property type="evidence" value="ECO:0007005"/>
    <property type="project" value="TAIR"/>
</dbReference>
<dbReference type="GO" id="GO:0004455">
    <property type="term" value="F:ketol-acid reductoisomerase activity"/>
    <property type="evidence" value="ECO:0007669"/>
    <property type="project" value="UniProtKB-EC"/>
</dbReference>
<dbReference type="GO" id="GO:0009097">
    <property type="term" value="P:isoleucine biosynthetic process"/>
    <property type="evidence" value="ECO:0007669"/>
    <property type="project" value="UniProtKB-UniPathway"/>
</dbReference>
<dbReference type="GO" id="GO:0009099">
    <property type="term" value="P:L-valine biosynthetic process"/>
    <property type="evidence" value="ECO:0007669"/>
    <property type="project" value="UniProtKB-UniPathway"/>
</dbReference>
<dbReference type="FunFam" id="1.10.1040.10:FF:000015">
    <property type="entry name" value="Ketol-acid reductoisomerase"/>
    <property type="match status" value="1"/>
</dbReference>
<dbReference type="FunFam" id="3.40.50.720:FF:000146">
    <property type="entry name" value="Ketol-acid reductoisomerase"/>
    <property type="match status" value="1"/>
</dbReference>
<dbReference type="Gene3D" id="1.10.1040.10">
    <property type="entry name" value="N-(1-d-carboxylethyl)-l-norvaline Dehydrogenase, domain 2"/>
    <property type="match status" value="1"/>
</dbReference>
<dbReference type="Gene3D" id="3.40.50.720">
    <property type="entry name" value="NAD(P)-binding Rossmann-like Domain"/>
    <property type="match status" value="1"/>
</dbReference>
<dbReference type="InterPro" id="IPR008927">
    <property type="entry name" value="6-PGluconate_DH-like_C_sf"/>
</dbReference>
<dbReference type="InterPro" id="IPR013328">
    <property type="entry name" value="6PGD_dom2"/>
</dbReference>
<dbReference type="InterPro" id="IPR013023">
    <property type="entry name" value="KARI"/>
</dbReference>
<dbReference type="InterPro" id="IPR000506">
    <property type="entry name" value="KARI_C"/>
</dbReference>
<dbReference type="InterPro" id="IPR013116">
    <property type="entry name" value="KARI_N"/>
</dbReference>
<dbReference type="InterPro" id="IPR016206">
    <property type="entry name" value="KetolA_reductoisomerase_plant"/>
</dbReference>
<dbReference type="InterPro" id="IPR036291">
    <property type="entry name" value="NAD(P)-bd_dom_sf"/>
</dbReference>
<dbReference type="PANTHER" id="PTHR21371">
    <property type="entry name" value="KETOL-ACID REDUCTOISOMERASE, MITOCHONDRIAL"/>
    <property type="match status" value="1"/>
</dbReference>
<dbReference type="PANTHER" id="PTHR21371:SF1">
    <property type="entry name" value="KETOL-ACID REDUCTOISOMERASE, MITOCHONDRIAL"/>
    <property type="match status" value="1"/>
</dbReference>
<dbReference type="Pfam" id="PF01450">
    <property type="entry name" value="KARI_C"/>
    <property type="match status" value="2"/>
</dbReference>
<dbReference type="Pfam" id="PF07991">
    <property type="entry name" value="KARI_N"/>
    <property type="match status" value="1"/>
</dbReference>
<dbReference type="PIRSF" id="PIRSF000118">
    <property type="entry name" value="Ilv5_plant"/>
    <property type="match status" value="1"/>
</dbReference>
<dbReference type="SUPFAM" id="SSF48179">
    <property type="entry name" value="6-phosphogluconate dehydrogenase C-terminal domain-like"/>
    <property type="match status" value="1"/>
</dbReference>
<dbReference type="SUPFAM" id="SSF51735">
    <property type="entry name" value="NAD(P)-binding Rossmann-fold domains"/>
    <property type="match status" value="1"/>
</dbReference>
<dbReference type="PROSITE" id="PS51851">
    <property type="entry name" value="KARI_C"/>
    <property type="match status" value="2"/>
</dbReference>
<dbReference type="PROSITE" id="PS51850">
    <property type="entry name" value="KARI_N"/>
    <property type="match status" value="1"/>
</dbReference>
<feature type="transit peptide" description="Chloroplast" evidence="7">
    <location>
        <begin position="1"/>
        <end position="52"/>
    </location>
</feature>
<feature type="chain" id="PRO_0000015629" description="Ketol-acid reductoisomerase, chloroplastic">
    <location>
        <begin position="53"/>
        <end position="591"/>
    </location>
</feature>
<feature type="domain" description="KARI N-terminal Rossmann" evidence="3">
    <location>
        <begin position="102"/>
        <end position="300"/>
    </location>
</feature>
<feature type="domain" description="KARI C-terminal knotted 1" evidence="4">
    <location>
        <begin position="301"/>
        <end position="449"/>
    </location>
</feature>
<feature type="domain" description="KARI C-terminal knotted 2" evidence="4">
    <location>
        <begin position="450"/>
        <end position="586"/>
    </location>
</feature>
<feature type="region of interest" description="Disordered" evidence="5">
    <location>
        <begin position="1"/>
        <end position="20"/>
    </location>
</feature>
<feature type="active site" evidence="2">
    <location>
        <position position="220"/>
    </location>
</feature>
<feature type="binding site" evidence="1">
    <location>
        <begin position="123"/>
        <end position="130"/>
    </location>
    <ligand>
        <name>NADP(+)</name>
        <dbReference type="ChEBI" id="CHEBI:58349"/>
    </ligand>
</feature>
<feature type="binding site" evidence="1">
    <location>
        <begin position="156"/>
        <end position="161"/>
    </location>
    <ligand>
        <name>NADP(+)</name>
        <dbReference type="ChEBI" id="CHEBI:58349"/>
    </ligand>
</feature>
<feature type="binding site" evidence="1">
    <location>
        <begin position="195"/>
        <end position="199"/>
    </location>
    <ligand>
        <name>NADP(+)</name>
        <dbReference type="ChEBI" id="CHEBI:58349"/>
    </ligand>
</feature>
<feature type="binding site" evidence="4">
    <location>
        <position position="309"/>
    </location>
    <ligand>
        <name>Mg(2+)</name>
        <dbReference type="ChEBI" id="CHEBI:18420"/>
        <label>1</label>
    </ligand>
</feature>
<feature type="binding site" evidence="4">
    <location>
        <position position="309"/>
    </location>
    <ligand>
        <name>Mg(2+)</name>
        <dbReference type="ChEBI" id="CHEBI:18420"/>
        <label>2</label>
    </ligand>
</feature>
<feature type="binding site" evidence="4">
    <location>
        <position position="313"/>
    </location>
    <ligand>
        <name>Mg(2+)</name>
        <dbReference type="ChEBI" id="CHEBI:18420"/>
        <label>1</label>
    </ligand>
</feature>
<feature type="binding site" evidence="4">
    <location>
        <position position="486"/>
    </location>
    <ligand>
        <name>Mg(2+)</name>
        <dbReference type="ChEBI" id="CHEBI:18420"/>
        <label>2</label>
    </ligand>
</feature>
<feature type="binding site" evidence="4">
    <location>
        <position position="490"/>
    </location>
    <ligand>
        <name>Mg(2+)</name>
        <dbReference type="ChEBI" id="CHEBI:18420"/>
        <label>2</label>
    </ligand>
</feature>
<feature type="binding site" evidence="4">
    <location>
        <position position="512"/>
    </location>
    <ligand>
        <name>substrate</name>
    </ligand>
</feature>
<feature type="modified residue" description="N-acetylthreonine" evidence="7">
    <location>
        <position position="53"/>
    </location>
</feature>
<feature type="sequence conflict" description="In Ref. 1; CAA48253." evidence="6" ref="1">
    <original>A</original>
    <variation>R</variation>
    <location>
        <position position="285"/>
    </location>
</feature>
<feature type="sequence conflict" description="In Ref. 1; CAA48253." evidence="6" ref="1">
    <original>A</original>
    <variation>V</variation>
    <location>
        <position position="579"/>
    </location>
</feature>
<reference key="1">
    <citation type="journal article" date="1993" name="Plant Mol. Biol.">
        <title>Nucleotide sequence and characterization of a cDNA encoding the acetohydroxy acid isomeroreductase from Arabidopsis thaliana.</title>
        <authorList>
            <person name="Curien G."/>
            <person name="Dumas R."/>
            <person name="Douce R."/>
        </authorList>
    </citation>
    <scope>NUCLEOTIDE SEQUENCE [MRNA]</scope>
</reference>
<reference key="2">
    <citation type="journal article" date="1993" name="Biochem. J.">
        <title>Branched-chain-amino-acid biosynthesis in plants: molecular cloning and characterization of the gene encoding acetohydroxy acid isomeroreductase (ketol-acid reductoisomerase) from Arabidopsis thaliana (thale cress).</title>
        <authorList>
            <person name="Dumas R."/>
            <person name="Curien G."/>
            <person name="Derose R.T."/>
            <person name="Douce R."/>
        </authorList>
    </citation>
    <scope>NUCLEOTIDE SEQUENCE [GENOMIC DNA]</scope>
</reference>
<reference key="3">
    <citation type="journal article" date="2000" name="Nature">
        <title>Sequence and analysis of chromosome 3 of the plant Arabidopsis thaliana.</title>
        <authorList>
            <person name="Salanoubat M."/>
            <person name="Lemcke K."/>
            <person name="Rieger M."/>
            <person name="Ansorge W."/>
            <person name="Unseld M."/>
            <person name="Fartmann B."/>
            <person name="Valle G."/>
            <person name="Bloecker H."/>
            <person name="Perez-Alonso M."/>
            <person name="Obermaier B."/>
            <person name="Delseny M."/>
            <person name="Boutry M."/>
            <person name="Grivell L.A."/>
            <person name="Mache R."/>
            <person name="Puigdomenech P."/>
            <person name="De Simone V."/>
            <person name="Choisne N."/>
            <person name="Artiguenave F."/>
            <person name="Robert C."/>
            <person name="Brottier P."/>
            <person name="Wincker P."/>
            <person name="Cattolico L."/>
            <person name="Weissenbach J."/>
            <person name="Saurin W."/>
            <person name="Quetier F."/>
            <person name="Schaefer M."/>
            <person name="Mueller-Auer S."/>
            <person name="Gabel C."/>
            <person name="Fuchs M."/>
            <person name="Benes V."/>
            <person name="Wurmbach E."/>
            <person name="Drzonek H."/>
            <person name="Erfle H."/>
            <person name="Jordan N."/>
            <person name="Bangert S."/>
            <person name="Wiedelmann R."/>
            <person name="Kranz H."/>
            <person name="Voss H."/>
            <person name="Holland R."/>
            <person name="Brandt P."/>
            <person name="Nyakatura G."/>
            <person name="Vezzi A."/>
            <person name="D'Angelo M."/>
            <person name="Pallavicini A."/>
            <person name="Toppo S."/>
            <person name="Simionati B."/>
            <person name="Conrad A."/>
            <person name="Hornischer K."/>
            <person name="Kauer G."/>
            <person name="Loehnert T.-H."/>
            <person name="Nordsiek G."/>
            <person name="Reichelt J."/>
            <person name="Scharfe M."/>
            <person name="Schoen O."/>
            <person name="Bargues M."/>
            <person name="Terol J."/>
            <person name="Climent J."/>
            <person name="Navarro P."/>
            <person name="Collado C."/>
            <person name="Perez-Perez A."/>
            <person name="Ottenwaelder B."/>
            <person name="Duchemin D."/>
            <person name="Cooke R."/>
            <person name="Laudie M."/>
            <person name="Berger-Llauro C."/>
            <person name="Purnelle B."/>
            <person name="Masuy D."/>
            <person name="de Haan M."/>
            <person name="Maarse A.C."/>
            <person name="Alcaraz J.-P."/>
            <person name="Cottet A."/>
            <person name="Casacuberta E."/>
            <person name="Monfort A."/>
            <person name="Argiriou A."/>
            <person name="Flores M."/>
            <person name="Liguori R."/>
            <person name="Vitale D."/>
            <person name="Mannhaupt G."/>
            <person name="Haase D."/>
            <person name="Schoof H."/>
            <person name="Rudd S."/>
            <person name="Zaccaria P."/>
            <person name="Mewes H.-W."/>
            <person name="Mayer K.F.X."/>
            <person name="Kaul S."/>
            <person name="Town C.D."/>
            <person name="Koo H.L."/>
            <person name="Tallon L.J."/>
            <person name="Jenkins J."/>
            <person name="Rooney T."/>
            <person name="Rizzo M."/>
            <person name="Walts A."/>
            <person name="Utterback T."/>
            <person name="Fujii C.Y."/>
            <person name="Shea T.P."/>
            <person name="Creasy T.H."/>
            <person name="Haas B."/>
            <person name="Maiti R."/>
            <person name="Wu D."/>
            <person name="Peterson J."/>
            <person name="Van Aken S."/>
            <person name="Pai G."/>
            <person name="Militscher J."/>
            <person name="Sellers P."/>
            <person name="Gill J.E."/>
            <person name="Feldblyum T.V."/>
            <person name="Preuss D."/>
            <person name="Lin X."/>
            <person name="Nierman W.C."/>
            <person name="Salzberg S.L."/>
            <person name="White O."/>
            <person name="Venter J.C."/>
            <person name="Fraser C.M."/>
            <person name="Kaneko T."/>
            <person name="Nakamura Y."/>
            <person name="Sato S."/>
            <person name="Kato T."/>
            <person name="Asamizu E."/>
            <person name="Sasamoto S."/>
            <person name="Kimura T."/>
            <person name="Idesawa K."/>
            <person name="Kawashima K."/>
            <person name="Kishida Y."/>
            <person name="Kiyokawa C."/>
            <person name="Kohara M."/>
            <person name="Matsumoto M."/>
            <person name="Matsuno A."/>
            <person name="Muraki A."/>
            <person name="Nakayama S."/>
            <person name="Nakazaki N."/>
            <person name="Shinpo S."/>
            <person name="Takeuchi C."/>
            <person name="Wada T."/>
            <person name="Watanabe A."/>
            <person name="Yamada M."/>
            <person name="Yasuda M."/>
            <person name="Tabata S."/>
        </authorList>
    </citation>
    <scope>NUCLEOTIDE SEQUENCE [LARGE SCALE GENOMIC DNA]</scope>
    <source>
        <strain>cv. Columbia</strain>
    </source>
</reference>
<reference key="4">
    <citation type="journal article" date="2017" name="Plant J.">
        <title>Araport11: a complete reannotation of the Arabidopsis thaliana reference genome.</title>
        <authorList>
            <person name="Cheng C.Y."/>
            <person name="Krishnakumar V."/>
            <person name="Chan A.P."/>
            <person name="Thibaud-Nissen F."/>
            <person name="Schobel S."/>
            <person name="Town C.D."/>
        </authorList>
    </citation>
    <scope>GENOME REANNOTATION</scope>
    <source>
        <strain>cv. Columbia</strain>
    </source>
</reference>
<reference key="5">
    <citation type="journal article" date="2003" name="Science">
        <title>Empirical analysis of transcriptional activity in the Arabidopsis genome.</title>
        <authorList>
            <person name="Yamada K."/>
            <person name="Lim J."/>
            <person name="Dale J.M."/>
            <person name="Chen H."/>
            <person name="Shinn P."/>
            <person name="Palm C.J."/>
            <person name="Southwick A.M."/>
            <person name="Wu H.C."/>
            <person name="Kim C.J."/>
            <person name="Nguyen M."/>
            <person name="Pham P.K."/>
            <person name="Cheuk R.F."/>
            <person name="Karlin-Newmann G."/>
            <person name="Liu S.X."/>
            <person name="Lam B."/>
            <person name="Sakano H."/>
            <person name="Wu T."/>
            <person name="Yu G."/>
            <person name="Miranda M."/>
            <person name="Quach H.L."/>
            <person name="Tripp M."/>
            <person name="Chang C.H."/>
            <person name="Lee J.M."/>
            <person name="Toriumi M.J."/>
            <person name="Chan M.M."/>
            <person name="Tang C.C."/>
            <person name="Onodera C.S."/>
            <person name="Deng J.M."/>
            <person name="Akiyama K."/>
            <person name="Ansari Y."/>
            <person name="Arakawa T."/>
            <person name="Banh J."/>
            <person name="Banno F."/>
            <person name="Bowser L."/>
            <person name="Brooks S.Y."/>
            <person name="Carninci P."/>
            <person name="Chao Q."/>
            <person name="Choy N."/>
            <person name="Enju A."/>
            <person name="Goldsmith A.D."/>
            <person name="Gurjal M."/>
            <person name="Hansen N.F."/>
            <person name="Hayashizaki Y."/>
            <person name="Johnson-Hopson C."/>
            <person name="Hsuan V.W."/>
            <person name="Iida K."/>
            <person name="Karnes M."/>
            <person name="Khan S."/>
            <person name="Koesema E."/>
            <person name="Ishida J."/>
            <person name="Jiang P.X."/>
            <person name="Jones T."/>
            <person name="Kawai J."/>
            <person name="Kamiya A."/>
            <person name="Meyers C."/>
            <person name="Nakajima M."/>
            <person name="Narusaka M."/>
            <person name="Seki M."/>
            <person name="Sakurai T."/>
            <person name="Satou M."/>
            <person name="Tamse R."/>
            <person name="Vaysberg M."/>
            <person name="Wallender E.K."/>
            <person name="Wong C."/>
            <person name="Yamamura Y."/>
            <person name="Yuan S."/>
            <person name="Shinozaki K."/>
            <person name="Davis R.W."/>
            <person name="Theologis A."/>
            <person name="Ecker J.R."/>
        </authorList>
    </citation>
    <scope>NUCLEOTIDE SEQUENCE [LARGE SCALE MRNA]</scope>
    <source>
        <strain>cv. Columbia</strain>
    </source>
</reference>
<reference key="6">
    <citation type="journal article" date="2007" name="Mol. Cell. Proteomics">
        <title>Multidimensional protein identification technology (MudPIT) analysis of ubiquitinated proteins in plants.</title>
        <authorList>
            <person name="Maor R."/>
            <person name="Jones A."/>
            <person name="Nuehse T.S."/>
            <person name="Studholme D.J."/>
            <person name="Peck S.C."/>
            <person name="Shirasu K."/>
        </authorList>
    </citation>
    <scope>IDENTIFICATION BY MASS SPECTROMETRY [LARGE SCALE ANALYSIS]</scope>
    <source>
        <strain>cv. Landsberg erecta</strain>
    </source>
</reference>
<reference key="7">
    <citation type="journal article" date="2012" name="Mol. Cell. Proteomics">
        <title>Comparative large-scale characterisation of plant vs. mammal proteins reveals similar and idiosyncratic N-alpha acetylation features.</title>
        <authorList>
            <person name="Bienvenut W.V."/>
            <person name="Sumpton D."/>
            <person name="Martinez A."/>
            <person name="Lilla S."/>
            <person name="Espagne C."/>
            <person name="Meinnel T."/>
            <person name="Giglione C."/>
        </authorList>
    </citation>
    <scope>ACETYLATION [LARGE SCALE ANALYSIS] AT THR-53</scope>
    <scope>CLEAVAGE OF TRANSIT PEPTIDE [LARGE SCALE ANALYSIS] AFTER ALA-52</scope>
    <scope>IDENTIFICATION BY MASS SPECTROMETRY [LARGE SCALE ANALYSIS]</scope>
</reference>
<comment type="catalytic activity">
    <reaction>
        <text>(2R)-2,3-dihydroxy-3-methylbutanoate + NADP(+) = (2S)-2-acetolactate + NADPH + H(+)</text>
        <dbReference type="Rhea" id="RHEA:22068"/>
        <dbReference type="ChEBI" id="CHEBI:15378"/>
        <dbReference type="ChEBI" id="CHEBI:49072"/>
        <dbReference type="ChEBI" id="CHEBI:57783"/>
        <dbReference type="ChEBI" id="CHEBI:58349"/>
        <dbReference type="ChEBI" id="CHEBI:58476"/>
        <dbReference type="EC" id="1.1.1.86"/>
    </reaction>
</comment>
<comment type="catalytic activity">
    <reaction>
        <text>(2R,3R)-2,3-dihydroxy-3-methylpentanoate + NADP(+) = (S)-2-ethyl-2-hydroxy-3-oxobutanoate + NADPH + H(+)</text>
        <dbReference type="Rhea" id="RHEA:13493"/>
        <dbReference type="ChEBI" id="CHEBI:15378"/>
        <dbReference type="ChEBI" id="CHEBI:49256"/>
        <dbReference type="ChEBI" id="CHEBI:49258"/>
        <dbReference type="ChEBI" id="CHEBI:57783"/>
        <dbReference type="ChEBI" id="CHEBI:58349"/>
        <dbReference type="EC" id="1.1.1.86"/>
    </reaction>
</comment>
<comment type="cofactor">
    <cofactor evidence="1">
        <name>Mg(2+)</name>
        <dbReference type="ChEBI" id="CHEBI:18420"/>
    </cofactor>
    <text evidence="1">Binds 2 magnesium ions per subunit.</text>
</comment>
<comment type="pathway">
    <text>Amino-acid biosynthesis; L-isoleucine biosynthesis; L-isoleucine from 2-oxobutanoate: step 2/4.</text>
</comment>
<comment type="pathway">
    <text>Amino-acid biosynthesis; L-valine biosynthesis; L-valine from pyruvate: step 2/4.</text>
</comment>
<comment type="subunit">
    <text evidence="1">Homodimer.</text>
</comment>
<comment type="subcellular location">
    <subcellularLocation>
        <location evidence="6">Plastid</location>
        <location evidence="6">Chloroplast</location>
    </subcellularLocation>
</comment>
<comment type="similarity">
    <text evidence="6">Belongs to the ketol-acid reductoisomerase family.</text>
</comment>
<proteinExistence type="evidence at protein level"/>
<protein>
    <recommendedName>
        <fullName>Ketol-acid reductoisomerase, chloroplastic</fullName>
        <ecNumber>1.1.1.86</ecNumber>
    </recommendedName>
    <alternativeName>
        <fullName>Acetohydroxy-acid reductoisomerase</fullName>
    </alternativeName>
    <alternativeName>
        <fullName>Alpha-keto-beta-hydroxylacyl reductoisomerase</fullName>
    </alternativeName>
</protein>
<gene>
    <name type="ordered locus">At3g58610</name>
    <name type="ORF">F14P22.200</name>
</gene>
<name>ILV5_ARATH</name>
<keyword id="KW-0007">Acetylation</keyword>
<keyword id="KW-0028">Amino-acid biosynthesis</keyword>
<keyword id="KW-0100">Branched-chain amino acid biosynthesis</keyword>
<keyword id="KW-0150">Chloroplast</keyword>
<keyword id="KW-0460">Magnesium</keyword>
<keyword id="KW-0479">Metal-binding</keyword>
<keyword id="KW-0521">NADP</keyword>
<keyword id="KW-0560">Oxidoreductase</keyword>
<keyword id="KW-0934">Plastid</keyword>
<keyword id="KW-1185">Reference proteome</keyword>
<keyword id="KW-0809">Transit peptide</keyword>
<organism>
    <name type="scientific">Arabidopsis thaliana</name>
    <name type="common">Mouse-ear cress</name>
    <dbReference type="NCBI Taxonomy" id="3702"/>
    <lineage>
        <taxon>Eukaryota</taxon>
        <taxon>Viridiplantae</taxon>
        <taxon>Streptophyta</taxon>
        <taxon>Embryophyta</taxon>
        <taxon>Tracheophyta</taxon>
        <taxon>Spermatophyta</taxon>
        <taxon>Magnoliopsida</taxon>
        <taxon>eudicotyledons</taxon>
        <taxon>Gunneridae</taxon>
        <taxon>Pentapetalae</taxon>
        <taxon>rosids</taxon>
        <taxon>malvids</taxon>
        <taxon>Brassicales</taxon>
        <taxon>Brassicaceae</taxon>
        <taxon>Camelineae</taxon>
        <taxon>Arabidopsis</taxon>
    </lineage>
</organism>
<evidence type="ECO:0000250" key="1"/>
<evidence type="ECO:0000255" key="2"/>
<evidence type="ECO:0000255" key="3">
    <source>
        <dbReference type="PROSITE-ProRule" id="PRU01197"/>
    </source>
</evidence>
<evidence type="ECO:0000255" key="4">
    <source>
        <dbReference type="PROSITE-ProRule" id="PRU01198"/>
    </source>
</evidence>
<evidence type="ECO:0000256" key="5">
    <source>
        <dbReference type="SAM" id="MobiDB-lite"/>
    </source>
</evidence>
<evidence type="ECO:0000305" key="6"/>
<evidence type="ECO:0007744" key="7">
    <source>
    </source>
</evidence>
<sequence length="591" mass="63812">MAAATSSIAPSLSCPSPSSSSKTLWSSKARTLALPNIGFLSSSSKSLRSLTATVAGNGATGSSLAARMVSSSAVKAPVSLDFETSVFKKEKVSLAGYEEYIVRGGRDLFKHLPDAFKGIKQIGVIGWGSQGPAQAQNLRDSLVEAKSDIVVKIGLRKGSRSFEEARAAGFTEESGTLGDIWETIAGSDLVLLLISDAAQADNYEKIFSHMKPNSILGLSHGFLLGHLQSSGLDFPKNISVVAVCPKGMGPSVRRLYVQGKEINGAGINASFAVHQDVDGRAADVALGWSVALGSPFTFATTLEQEYRSDIFGERGILLGAVHGIVESLFRRYTENGMSEDLAYKNTVECITGTISRTISTQGMLAVYNSLSEEGKKDFETAYSASFYPCMEILYECYEDVQSGSEIRSVVLAGRRFYEKEGLPAFPMGNIDQTRMWKVGERVRKSRPAGDLGPLYPFTAGVYVALMMAQIEILRKKGHSYSEIINESVIESVDSLNPFMHARGVSFMVDNCSTTARLGSRKWAPRFDYILTQQALVAVDSGAAINRDLISNFFSDPVHGAIEVCAQLRPTVDISVPADADFVRPELRQSSN</sequence>
<accession>Q05758</accession>
<accession>Q42559</accession>